<sequence>MKTRYFLLLGICMLSCRTDEKKQVQKEVDKPNVLFIAVDDLNNMISPIANFSNIQTPNFDRLAAMGVTFTDAHCPAPLCGPSRSAIMTGLRPSTTGIYGMTPDNKIRRDDNEATKDIIFLPEYFKKNGYHSMGIGKLFHNYAPDGMFDEGGGRVKGFGPFPEKRFVWDGFGTSKSRKGQYGRTNTDWGAFPESDTLMPDHQAVNWVLERFNKNYKQPFFLALGFQRPHVPLYVPQKWFDLYPLESIQTPPYQSDDLNDIPPVGLKINDLPMMPSTEWAINSGEWKKIIQAYLACVSFVDYELGRVLDALKNSPYAKNTIIVLWSDHGYRLGEKGTFAKHALWESATKAPLFFAGPNLPKGKKIDAPVEMLSIYPTLLELSGLQAYARNEAKSLVRMMQKNEGLKDTYAITTYGKNNHAVKVDGYRYIQYEDGTEEFYDNASDPNEWINEANNFKFKSKIEALKALLPKTNATWDAESNYTFQPYFVEQKTRGNVNAAKAVKVIGAER</sequence>
<reference key="1">
    <citation type="journal article" date="2013" name="Appl. Environ. Microbiol.">
        <title>The genome of the alga-associated marine flavobacterium Formosa agariphila KMM 3901T reveals a broad potential for degradation of algal polysaccharides.</title>
        <authorList>
            <person name="Mann A.J."/>
            <person name="Hahnke R.L."/>
            <person name="Huang S."/>
            <person name="Werner J."/>
            <person name="Xing P."/>
            <person name="Barbeyron T."/>
            <person name="Huettel B."/>
            <person name="Stueber K."/>
            <person name="Reinhardt R."/>
            <person name="Harder J."/>
            <person name="Gloeckner F.O."/>
            <person name="Amann R.I."/>
            <person name="Teeling H."/>
        </authorList>
    </citation>
    <scope>NUCLEOTIDE SEQUENCE [LARGE SCALE GENOMIC DNA]</scope>
    <source>
        <strain>DSM 15362 / KCTC 12365 / LMG 23005 / KMM 3901 / M-2Alg 35-1</strain>
    </source>
</reference>
<reference key="2">
    <citation type="journal article" date="2017" name="Algal Res.">
        <title>The enzymatic ulvan depolymerisation system from the alga-associated marine flavobacterium Formosa agariphila.</title>
        <authorList>
            <person name="Salinas A."/>
            <person name="French C.E."/>
        </authorList>
    </citation>
    <scope>REVISION OF GENE MODEL</scope>
</reference>
<reference key="3">
    <citation type="journal article" date="2019" name="Nat. Chem. Biol.">
        <title>A marine bacterial enzymatic cascade degrades the algal polysaccharide ulvan.</title>
        <authorList>
            <person name="Reisky L."/>
            <person name="Prechoux A."/>
            <person name="Zuehlke M.K."/>
            <person name="Baeumgen M."/>
            <person name="Robb C.S."/>
            <person name="Gerlach N."/>
            <person name="Roret T."/>
            <person name="Stanetty C."/>
            <person name="Larocque R."/>
            <person name="Michel G."/>
            <person name="Song T."/>
            <person name="Markert S."/>
            <person name="Unfried F."/>
            <person name="Mihovilovic M.D."/>
            <person name="Trautwein-Schult A."/>
            <person name="Becher D."/>
            <person name="Schweder T."/>
            <person name="Bornscheuer U.T."/>
            <person name="Hehemann J.H."/>
        </authorList>
    </citation>
    <scope>FUNCTION</scope>
    <scope>CATALYTIC ACTIVITY</scope>
    <scope>SUBCELLULAR LOCATION</scope>
</reference>
<keyword id="KW-0106">Calcium</keyword>
<keyword id="KW-0378">Hydrolase</keyword>
<keyword id="KW-0479">Metal-binding</keyword>
<keyword id="KW-0574">Periplasm</keyword>
<keyword id="KW-1185">Reference proteome</keyword>
<keyword id="KW-0732">Signal</keyword>
<comment type="function">
    <text evidence="4 7">Sulfatase that may be involved in ulvan degradation (PubMed:31285597). Ulvan is the main polysaccharide component of the Ulvales (green seaweed) cell wall. It is composed of disaccharide building blocks comprising 3-sulfated rhamnose (Rha3S) linked to D-glucuronic acid (GlcA), L-iduronic acid (IduA), or D-xylose (Xyl) (Probable). Has no activity on different ulvan polymers (PubMed:31285597).</text>
</comment>
<comment type="cofactor">
    <cofactor evidence="2">
        <name>Ca(2+)</name>
        <dbReference type="ChEBI" id="CHEBI:29108"/>
    </cofactor>
    <text evidence="2">Binds 1 Ca(2+) ion per subunit.</text>
</comment>
<comment type="subcellular location">
    <subcellularLocation>
        <location evidence="7">Periplasm</location>
    </subcellularLocation>
</comment>
<comment type="PTM">
    <text evidence="1">The conversion to 3-oxoalanine (also known as C-formylglycine, FGly), of a serine or cysteine residue in prokaryotes and of a cysteine residue in eukaryotes, is critical for catalytic activity. This post-translational modification is severely defective in multiple sulfatase deficiency (MSD).</text>
</comment>
<comment type="similarity">
    <text evidence="6">Belongs to the sulfatase family.</text>
</comment>
<comment type="sequence caution" evidence="8">
    <conflict type="erroneous initiation">
        <sequence resource="EMBL-CDS" id="CDF79915"/>
    </conflict>
    <text>Truncated N-terminus.</text>
</comment>
<protein>
    <recommendedName>
        <fullName evidence="6">Sulfatase</fullName>
        <ecNumber evidence="4">3.1.6.-</ecNumber>
    </recommendedName>
    <alternativeName>
        <fullName evidence="5">Arylsulfatase</fullName>
    </alternativeName>
    <alternativeName>
        <fullName evidence="5">Polysaccharide utilization locus H protein P14</fullName>
        <shortName>PUL H protein P14</shortName>
    </alternativeName>
    <alternativeName>
        <fullName evidence="6">Sulfatase family S1 subfamily 7 protein P14</fullName>
        <shortName evidence="5">P14_S1_7</shortName>
    </alternativeName>
</protein>
<accession>T2KMG4</accession>
<evidence type="ECO:0000250" key="1">
    <source>
        <dbReference type="UniProtKB" id="P15289"/>
    </source>
</evidence>
<evidence type="ECO:0000250" key="2">
    <source>
        <dbReference type="UniProtKB" id="T2KPK5"/>
    </source>
</evidence>
<evidence type="ECO:0000255" key="3"/>
<evidence type="ECO:0000269" key="4">
    <source>
    </source>
</evidence>
<evidence type="ECO:0000303" key="5">
    <source>
    </source>
</evidence>
<evidence type="ECO:0000305" key="6"/>
<evidence type="ECO:0000305" key="7">
    <source>
    </source>
</evidence>
<evidence type="ECO:0000305" key="8">
    <source ref="2"/>
</evidence>
<evidence type="ECO:0000312" key="9">
    <source>
        <dbReference type="EMBL" id="CDF79915.1"/>
    </source>
</evidence>
<proteinExistence type="evidence at protein level"/>
<dbReference type="EC" id="3.1.6.-" evidence="4"/>
<dbReference type="EMBL" id="HG315671">
    <property type="protein sequence ID" value="CDF79915.1"/>
    <property type="status" value="ALT_INIT"/>
    <property type="molecule type" value="Genomic_DNA"/>
</dbReference>
<dbReference type="RefSeq" id="WP_051774709.1">
    <property type="nucleotide sequence ID" value="NZ_HG315671.1"/>
</dbReference>
<dbReference type="SMR" id="T2KMG4"/>
<dbReference type="STRING" id="1347342.BN863_22030"/>
<dbReference type="PATRIC" id="fig|1347342.6.peg.2210"/>
<dbReference type="eggNOG" id="COG3119">
    <property type="taxonomic scope" value="Bacteria"/>
</dbReference>
<dbReference type="HOGENOM" id="CLU_006332_9_0_10"/>
<dbReference type="OrthoDB" id="9763552at2"/>
<dbReference type="Proteomes" id="UP000016160">
    <property type="component" value="Chromosome"/>
</dbReference>
<dbReference type="GO" id="GO:0005737">
    <property type="term" value="C:cytoplasm"/>
    <property type="evidence" value="ECO:0007669"/>
    <property type="project" value="TreeGrafter"/>
</dbReference>
<dbReference type="GO" id="GO:0042597">
    <property type="term" value="C:periplasmic space"/>
    <property type="evidence" value="ECO:0007669"/>
    <property type="project" value="UniProtKB-SubCell"/>
</dbReference>
<dbReference type="GO" id="GO:0004423">
    <property type="term" value="F:iduronate-2-sulfatase activity"/>
    <property type="evidence" value="ECO:0007669"/>
    <property type="project" value="InterPro"/>
</dbReference>
<dbReference type="GO" id="GO:0046872">
    <property type="term" value="F:metal ion binding"/>
    <property type="evidence" value="ECO:0007669"/>
    <property type="project" value="UniProtKB-KW"/>
</dbReference>
<dbReference type="CDD" id="cd16030">
    <property type="entry name" value="iduronate-2-sulfatase"/>
    <property type="match status" value="1"/>
</dbReference>
<dbReference type="Gene3D" id="3.40.720.10">
    <property type="entry name" value="Alkaline Phosphatase, subunit A"/>
    <property type="match status" value="1"/>
</dbReference>
<dbReference type="InterPro" id="IPR017850">
    <property type="entry name" value="Alkaline_phosphatase_core_sf"/>
</dbReference>
<dbReference type="InterPro" id="IPR035874">
    <property type="entry name" value="IDS"/>
</dbReference>
<dbReference type="InterPro" id="IPR024607">
    <property type="entry name" value="Sulfatase_CS"/>
</dbReference>
<dbReference type="InterPro" id="IPR000917">
    <property type="entry name" value="Sulfatase_N"/>
</dbReference>
<dbReference type="PANTHER" id="PTHR45953">
    <property type="entry name" value="IDURONATE 2-SULFATASE"/>
    <property type="match status" value="1"/>
</dbReference>
<dbReference type="PANTHER" id="PTHR45953:SF1">
    <property type="entry name" value="IDURONATE 2-SULFATASE"/>
    <property type="match status" value="1"/>
</dbReference>
<dbReference type="Pfam" id="PF00884">
    <property type="entry name" value="Sulfatase"/>
    <property type="match status" value="1"/>
</dbReference>
<dbReference type="SUPFAM" id="SSF53649">
    <property type="entry name" value="Alkaline phosphatase-like"/>
    <property type="match status" value="1"/>
</dbReference>
<dbReference type="PROSITE" id="PS00523">
    <property type="entry name" value="SULFATASE_1"/>
    <property type="match status" value="1"/>
</dbReference>
<dbReference type="PROSITE" id="PS00149">
    <property type="entry name" value="SULFATASE_2"/>
    <property type="match status" value="1"/>
</dbReference>
<gene>
    <name evidence="9" type="ORF">BN863_22030</name>
</gene>
<feature type="signal peptide" evidence="3">
    <location>
        <begin position="1"/>
        <end position="18"/>
    </location>
</feature>
<feature type="chain" id="PRO_0000448336" description="Sulfatase">
    <location>
        <begin position="19"/>
        <end position="507"/>
    </location>
</feature>
<feature type="active site" description="Nucleophile" evidence="1">
    <location>
        <position position="79"/>
    </location>
</feature>
<feature type="active site" evidence="1">
    <location>
        <position position="139"/>
    </location>
</feature>
<feature type="binding site" evidence="2">
    <location>
        <position position="39"/>
    </location>
    <ligand>
        <name>Ca(2+)</name>
        <dbReference type="ChEBI" id="CHEBI:29108"/>
    </ligand>
</feature>
<feature type="binding site" evidence="2">
    <location>
        <position position="40"/>
    </location>
    <ligand>
        <name>Ca(2+)</name>
        <dbReference type="ChEBI" id="CHEBI:29108"/>
    </ligand>
</feature>
<feature type="binding site" description="via 3-oxoalanine" evidence="2">
    <location>
        <position position="79"/>
    </location>
    <ligand>
        <name>Ca(2+)</name>
        <dbReference type="ChEBI" id="CHEBI:29108"/>
    </ligand>
</feature>
<feature type="binding site" evidence="2">
    <location>
        <position position="325"/>
    </location>
    <ligand>
        <name>Ca(2+)</name>
        <dbReference type="ChEBI" id="CHEBI:29108"/>
    </ligand>
</feature>
<feature type="binding site" evidence="2">
    <location>
        <position position="326"/>
    </location>
    <ligand>
        <name>Ca(2+)</name>
        <dbReference type="ChEBI" id="CHEBI:29108"/>
    </ligand>
</feature>
<feature type="modified residue" description="3-oxoalanine (Cys)" evidence="1">
    <location>
        <position position="79"/>
    </location>
</feature>
<organism>
    <name type="scientific">Formosa agariphila (strain DSM 15362 / KCTC 12365 / LMG 23005 / KMM 3901 / M-2Alg 35-1)</name>
    <dbReference type="NCBI Taxonomy" id="1347342"/>
    <lineage>
        <taxon>Bacteria</taxon>
        <taxon>Pseudomonadati</taxon>
        <taxon>Bacteroidota</taxon>
        <taxon>Flavobacteriia</taxon>
        <taxon>Flavobacteriales</taxon>
        <taxon>Flavobacteriaceae</taxon>
        <taxon>Formosa</taxon>
    </lineage>
</organism>
<name>PLH14_FORAG</name>